<protein>
    <recommendedName>
        <fullName>Minor capsid protein VP1</fullName>
        <ecNumber evidence="1">3.1.1.4</ecNumber>
    </recommendedName>
</protein>
<evidence type="ECO:0000250" key="1">
    <source>
        <dbReference type="UniProtKB" id="Q3YPH4"/>
    </source>
</evidence>
<evidence type="ECO:0000250" key="2">
    <source>
        <dbReference type="UniProtKB" id="Q9PZT0"/>
    </source>
</evidence>
<evidence type="ECO:0000256" key="3">
    <source>
        <dbReference type="SAM" id="MobiDB-lite"/>
    </source>
</evidence>
<evidence type="ECO:0000305" key="4"/>
<organismHost>
    <name type="scientific">Homo sapiens</name>
    <name type="common">Human</name>
    <dbReference type="NCBI Taxonomy" id="9606"/>
</organismHost>
<feature type="chain" id="PRO_0000445382" description="Minor capsid protein VP1">
    <location>
        <begin position="1"/>
        <end position="667"/>
    </location>
</feature>
<feature type="region of interest" description="Phospholipase A2-like" evidence="1">
    <location>
        <begin position="11"/>
        <end position="66"/>
    </location>
</feature>
<feature type="region of interest" description="Disordered" evidence="3">
    <location>
        <begin position="107"/>
        <end position="159"/>
    </location>
</feature>
<feature type="short sequence motif" description="Nuclear localization signal" evidence="2">
    <location>
        <begin position="610"/>
        <end position="621"/>
    </location>
</feature>
<feature type="compositionally biased region" description="Gly residues" evidence="3">
    <location>
        <begin position="149"/>
        <end position="159"/>
    </location>
</feature>
<feature type="splice variant" id="VSP_059857" description="In isoform Major capsid protein VP3.">
    <location>
        <begin position="1"/>
        <end position="129"/>
    </location>
</feature>
<feature type="splice variant" id="VSP_059858" description="In isoform Minor capsid protein VP2.">
    <location>
        <begin position="1"/>
        <end position="90"/>
    </location>
</feature>
<feature type="splice variant" id="VSP_059864" description="In isoform Minor capsid protein VP2.">
    <original>V</original>
    <variation>M</variation>
    <location>
        <position position="91"/>
    </location>
</feature>
<gene>
    <name type="primary">VP1</name>
</gene>
<reference key="1">
    <citation type="journal article" date="2009" name="J. Infect. Dis.">
        <title>A newly identified bocavirus species in human stool.</title>
        <authorList>
            <person name="Kapoor A."/>
            <person name="Slikas E."/>
            <person name="Simmonds P."/>
            <person name="Chieochansin T."/>
            <person name="Naeem A."/>
            <person name="Shaukat S."/>
            <person name="Alam M.M."/>
            <person name="Sharif S."/>
            <person name="Angez M."/>
            <person name="Zaidi S."/>
            <person name="Delwart E."/>
        </authorList>
    </citation>
    <scope>NUCLEOTIDE SEQUENCE [LARGE SCALE GENOMIC DNA] (ISOFORMS MINOR CAPSID PROTEIN VP1 AND MAJOR CAPSID PROTEIN VP3)</scope>
    <source>
        <strain>PK-5510</strain>
    </source>
</reference>
<accession>B9UYK7</accession>
<accession>B9UYK8</accession>
<proteinExistence type="inferred from homology"/>
<sequence>MPPIKRQPGGWVLPGYKYLGPFNPLENGEPVNKADRAAQAHDKSYSEIIKSGKNPYLYFNKADEKFIDDLKNDWSLGGIIGSSFFKLKRAVAPALGNKERAQKRHFYFANSNKGAKKPKNNEPKPGTSKMSENEIQDQQPSGSMEERGGGGGAVGSVGGGKGSSVGISTGGWVGGSYFTDSYVITKNTRQFLVKIQNDHKYRTENIIPSNAGGKSQRCVSTPWSYFNFNQYSSHFSPQDWQHLTNEYKRFKPRKMHVKIYNLQIKQILSNGADTTYNNDLTAGVHIFCDGEHAYPNATHPWDEDVMPELPYETWYLFQYGYIPVIHELAEMEDANAVEKAIALQIPFFMLENSDHEVLRTGESTEFTFDFDCEWINNERAYIPPGLMFNPKVPTRRAQYIRQHGNTASSNTRIQPYAKPTSWMTGPGLLSAQRVGPAGSDTASWMVVVNPDGAAVNSGMAGVGSGFDPPSGSLRPTDLEYKIQWYQTPAGTNSDGNIISNPPLSMLRDQALYRGNQTTYNLCSDVWMFPNQIWDRYPITRENPIWCKKPRSDKNTIIDPFDGTLAMDHPPGTIFIKMAKIPVPSNNNADSYLNIYCTGQVSCEIVWEVERYATKNWRPERRHTALGLGIGGEENVNPTYHVDKNGKYIQPTTWDMCYPIKTNINKVL</sequence>
<keyword id="KW-0024">Alternative initiation</keyword>
<keyword id="KW-0167">Capsid protein</keyword>
<keyword id="KW-1035">Host cytoplasm</keyword>
<keyword id="KW-1048">Host nucleus</keyword>
<keyword id="KW-0378">Hydrolase</keyword>
<keyword id="KW-0442">Lipid degradation</keyword>
<keyword id="KW-0443">Lipid metabolism</keyword>
<keyword id="KW-1140">T=1 icosahedral capsid protein</keyword>
<keyword id="KW-0946">Virion</keyword>
<dbReference type="EC" id="3.1.1.4" evidence="1"/>
<dbReference type="EMBL" id="FJ170278">
    <property type="protein sequence ID" value="ACJ38933.1"/>
    <property type="molecule type" value="Genomic_DNA"/>
</dbReference>
<dbReference type="EMBL" id="FJ170278">
    <property type="protein sequence ID" value="ACJ38934.1"/>
    <property type="molecule type" value="Genomic_DNA"/>
</dbReference>
<dbReference type="RefSeq" id="YP_002586775.1">
    <property type="nucleotide sequence ID" value="NC_012042.1"/>
</dbReference>
<dbReference type="SMR" id="B9UYK7"/>
<dbReference type="DNASU" id="7755624"/>
<dbReference type="KEGG" id="vg:7755624"/>
<dbReference type="KEGG" id="vg:7755625"/>
<dbReference type="Proteomes" id="UP000150026">
    <property type="component" value="Segment"/>
</dbReference>
<dbReference type="GO" id="GO:0030430">
    <property type="term" value="C:host cell cytoplasm"/>
    <property type="evidence" value="ECO:0007669"/>
    <property type="project" value="UniProtKB-SubCell"/>
</dbReference>
<dbReference type="GO" id="GO:0042025">
    <property type="term" value="C:host cell nucleus"/>
    <property type="evidence" value="ECO:0007669"/>
    <property type="project" value="UniProtKB-SubCell"/>
</dbReference>
<dbReference type="GO" id="GO:0039615">
    <property type="term" value="C:T=1 icosahedral viral capsid"/>
    <property type="evidence" value="ECO:0007669"/>
    <property type="project" value="UniProtKB-KW"/>
</dbReference>
<dbReference type="GO" id="GO:0004623">
    <property type="term" value="F:phospholipase A2 activity"/>
    <property type="evidence" value="ECO:0007669"/>
    <property type="project" value="UniProtKB-EC"/>
</dbReference>
<dbReference type="GO" id="GO:0005198">
    <property type="term" value="F:structural molecule activity"/>
    <property type="evidence" value="ECO:0007669"/>
    <property type="project" value="InterPro"/>
</dbReference>
<dbReference type="GO" id="GO:0016042">
    <property type="term" value="P:lipid catabolic process"/>
    <property type="evidence" value="ECO:0007669"/>
    <property type="project" value="UniProtKB-KW"/>
</dbReference>
<dbReference type="Gene3D" id="2.170.30.10">
    <property type="entry name" value="Parvovirus coat protein VP1/VP2"/>
    <property type="match status" value="1"/>
</dbReference>
<dbReference type="InterPro" id="IPR016184">
    <property type="entry name" value="Capsid/spike_ssDNA_virus"/>
</dbReference>
<dbReference type="InterPro" id="IPR001403">
    <property type="entry name" value="Parvovirus_coat"/>
</dbReference>
<dbReference type="InterPro" id="IPR013607">
    <property type="entry name" value="Phospholipase_A2-like"/>
</dbReference>
<dbReference type="InterPro" id="IPR036952">
    <property type="entry name" value="VP1/VP2"/>
</dbReference>
<dbReference type="Pfam" id="PF00740">
    <property type="entry name" value="Parvo_coat"/>
    <property type="match status" value="2"/>
</dbReference>
<dbReference type="Pfam" id="PF08398">
    <property type="entry name" value="Phospholip_A2_4"/>
    <property type="match status" value="1"/>
</dbReference>
<dbReference type="SUPFAM" id="SSF88645">
    <property type="entry name" value="ssDNA viruses"/>
    <property type="match status" value="1"/>
</dbReference>
<comment type="function">
    <text evidence="1 2">Capsid proteins self-assembles to form an icosahedral capsid with a T=1 symmetry, about 26 nm in diameter, and consisting of 60 copies of three size variants of the capsid proteins, VP1, and VP3, which differ by the presence of an N-terminal extension in the minor protein VP1. The capsid has a channel at the 5-fold axis and there are densities extending the 5-fold axis into the interior of the capsid. The capsid encapsulates the genomic ssDNA (By similarity). Binding to the host receptors also induces capsid rearrangements leading to surface exposure of VP1 N-terminus, specifically its phospholipase A2-like region. The additional N-terminal region of isoform Minor capsid protein VP1, called VP1u, may serve as a lipolytic enzyme to breach the endosomal membrane during entry into host cell and might contribute to virus transport to the nucleus (By similarity).</text>
</comment>
<comment type="catalytic activity">
    <reaction evidence="1">
        <text>a 1,2-diacyl-sn-glycero-3-phosphocholine + H2O = a 1-acyl-sn-glycero-3-phosphocholine + a fatty acid + H(+)</text>
        <dbReference type="Rhea" id="RHEA:15801"/>
        <dbReference type="ChEBI" id="CHEBI:15377"/>
        <dbReference type="ChEBI" id="CHEBI:15378"/>
        <dbReference type="ChEBI" id="CHEBI:28868"/>
        <dbReference type="ChEBI" id="CHEBI:57643"/>
        <dbReference type="ChEBI" id="CHEBI:58168"/>
        <dbReference type="EC" id="3.1.1.4"/>
    </reaction>
</comment>
<comment type="subunit">
    <molecule>Isoform Minor capsid protein VP1</molecule>
    <text evidence="1">Heteromultimer of isoform Minor capsid protein VP1, isoform Minor capsid protein VP2 and isoform Major capsid protein VP3 (By similarity).</text>
</comment>
<comment type="subunit">
    <molecule>Isoform Minor capsid protein VP2</molecule>
    <text evidence="1">Heteromultimer of isoform Minor capsid protein VP1, isoform Minor capsid protein VP2 and isoform Major capsid protein VP3 (By similarity).</text>
</comment>
<comment type="subunit">
    <molecule>Isoform Major capsid protein VP3</molecule>
    <text evidence="1">Homomultimer (By similarity). 10 fold more abundant than the minor capsid proteins VP1 and VP2 (By similarity). Heteromultimer of isoform Minor capsid protein VP1, isoform Minor capsid protein VP2 and isoform Major capsid protein VP3 (By similarity).</text>
</comment>
<comment type="subcellular location">
    <molecule>Isoform Minor capsid protein VP1</molecule>
    <subcellularLocation>
        <location evidence="1">Virion</location>
    </subcellularLocation>
    <subcellularLocation>
        <location evidence="1">Host nucleus</location>
    </subcellularLocation>
    <subcellularLocation>
        <location evidence="1">Host cytoplasm</location>
    </subcellularLocation>
    <text evidence="1">Slightly detected in the cytoplasm, mainly seen in the nucleus.</text>
</comment>
<comment type="subcellular location">
    <molecule>Isoform Minor capsid protein VP2</molecule>
    <subcellularLocation>
        <location evidence="1">Virion</location>
    </subcellularLocation>
</comment>
<comment type="subcellular location">
    <molecule>Isoform Major capsid protein VP3</molecule>
    <subcellularLocation>
        <location evidence="1">Virion</location>
    </subcellularLocation>
    <subcellularLocation>
        <location evidence="1">Host nucleus</location>
    </subcellularLocation>
    <subcellularLocation>
        <location evidence="1">Host cytoplasm</location>
    </subcellularLocation>
    <text evidence="1">Slightly detected in the cytoplasm, mainly seen in the nucleus.</text>
</comment>
<comment type="alternative products">
    <event type="alternative initiation"/>
    <isoform>
        <id>B9UYK7-1</id>
        <name>Minor capsid protein VP1</name>
        <sequence type="displayed"/>
    </isoform>
    <isoform>
        <id>B9UYK7-2</id>
        <name>Minor capsid protein VP2</name>
        <sequence type="described" ref="VSP_059858 VSP_059864"/>
    </isoform>
    <isoform>
        <id>B9UYK7-3</id>
        <name>Major capsid protein VP3</name>
        <sequence type="described" ref="VSP_059857"/>
    </isoform>
    <text evidence="1">The VP-encoding mRNA generates the three capsid proteins. Minor capsid protein VP1 and Major capsid protein VP3 initiate at canonical initiation site, whereas Minor capsid protein VP2 initiates at a GCT codon.</text>
</comment>
<comment type="domain">
    <text evidence="1 2">The N-terminus of Isoform Minor capsid protein VP1, VP1u, contains a phospholipase A2-like region (By similarity). VP1u may play a role in the disruption of host tight junctions in the airway tract (By similarity).</text>
</comment>
<comment type="domain">
    <text evidence="2">A nuclear localization signal is present in the C-terminus and can be recognized by cellular nuclear import molecules. After assembly, it is hidden because it is on the inner capsid surface.</text>
</comment>
<comment type="similarity">
    <text evidence="4">Belongs to the parvoviridae capsid protein family.</text>
</comment>
<comment type="caution">
    <text evidence="4">Isoform major capsid protein VP3 has former been designated as VP2.</text>
</comment>
<name>CAPSD_HBOC2</name>
<organism>
    <name type="scientific">Human bocavirus 2</name>
    <name type="common">HBoV2</name>
    <name type="synonym">Human bocavirus type 2</name>
    <dbReference type="NCBI Taxonomy" id="573977"/>
    <lineage>
        <taxon>Viruses</taxon>
        <taxon>Monodnaviria</taxon>
        <taxon>Shotokuvirae</taxon>
        <taxon>Cossaviricota</taxon>
        <taxon>Quintoviricetes</taxon>
        <taxon>Piccovirales</taxon>
        <taxon>Parvoviridae</taxon>
        <taxon>Parvovirinae</taxon>
        <taxon>Bocaparvovirus</taxon>
        <taxon>Bocaparvovirus primate2</taxon>
    </lineage>
</organism>